<proteinExistence type="inferred from homology"/>
<comment type="function">
    <text evidence="1">Probably catalyzes the deacetylation of acetylated carbohydrates an important step in the degradation of oligosaccharides.</text>
</comment>
<comment type="cofactor">
    <cofactor evidence="1">
        <name>Mg(2+)</name>
        <dbReference type="ChEBI" id="CHEBI:18420"/>
    </cofactor>
</comment>
<comment type="subunit">
    <text evidence="1">Homodimer.</text>
</comment>
<comment type="similarity">
    <text evidence="1">Belongs to the YdjC deacetylase family.</text>
</comment>
<evidence type="ECO:0000255" key="1">
    <source>
        <dbReference type="HAMAP-Rule" id="MF_01246"/>
    </source>
</evidence>
<name>YDJC_LISMO</name>
<keyword id="KW-0119">Carbohydrate metabolism</keyword>
<keyword id="KW-0378">Hydrolase</keyword>
<keyword id="KW-0460">Magnesium</keyword>
<keyword id="KW-0479">Metal-binding</keyword>
<keyword id="KW-1185">Reference proteome</keyword>
<reference key="1">
    <citation type="journal article" date="2001" name="Science">
        <title>Comparative genomics of Listeria species.</title>
        <authorList>
            <person name="Glaser P."/>
            <person name="Frangeul L."/>
            <person name="Buchrieser C."/>
            <person name="Rusniok C."/>
            <person name="Amend A."/>
            <person name="Baquero F."/>
            <person name="Berche P."/>
            <person name="Bloecker H."/>
            <person name="Brandt P."/>
            <person name="Chakraborty T."/>
            <person name="Charbit A."/>
            <person name="Chetouani F."/>
            <person name="Couve E."/>
            <person name="de Daruvar A."/>
            <person name="Dehoux P."/>
            <person name="Domann E."/>
            <person name="Dominguez-Bernal G."/>
            <person name="Duchaud E."/>
            <person name="Durant L."/>
            <person name="Dussurget O."/>
            <person name="Entian K.-D."/>
            <person name="Fsihi H."/>
            <person name="Garcia-del Portillo F."/>
            <person name="Garrido P."/>
            <person name="Gautier L."/>
            <person name="Goebel W."/>
            <person name="Gomez-Lopez N."/>
            <person name="Hain T."/>
            <person name="Hauf J."/>
            <person name="Jackson D."/>
            <person name="Jones L.-M."/>
            <person name="Kaerst U."/>
            <person name="Kreft J."/>
            <person name="Kuhn M."/>
            <person name="Kunst F."/>
            <person name="Kurapkat G."/>
            <person name="Madueno E."/>
            <person name="Maitournam A."/>
            <person name="Mata Vicente J."/>
            <person name="Ng E."/>
            <person name="Nedjari H."/>
            <person name="Nordsiek G."/>
            <person name="Novella S."/>
            <person name="de Pablos B."/>
            <person name="Perez-Diaz J.-C."/>
            <person name="Purcell R."/>
            <person name="Remmel B."/>
            <person name="Rose M."/>
            <person name="Schlueter T."/>
            <person name="Simoes N."/>
            <person name="Tierrez A."/>
            <person name="Vazquez-Boland J.-A."/>
            <person name="Voss H."/>
            <person name="Wehland J."/>
            <person name="Cossart P."/>
        </authorList>
    </citation>
    <scope>NUCLEOTIDE SEQUENCE [LARGE SCALE GENOMIC DNA]</scope>
    <source>
        <strain>ATCC BAA-679 / EGD-e</strain>
    </source>
</reference>
<sequence>MKIIFNADDFGISPGAVYGILESYKRGVVKSTTLLANSPAFDLAVEVAKENPGLDIGAHLTLTFGSPVLQGLETLTDDDGRFRRNYTSLENGLADVDMNEVERELTAQIEKILDAGITISHFDTHHSIEPLIYPVQHKLAEKYGVSIRRHSDVSDFGAIKTPDLFATEFYADGVSFETIKKLVQKHIGTNDVVEVMTHPAFIDETLREISSYVEPRIKEVSILTSRELQAYLGQQEVEIISFRDL</sequence>
<organism>
    <name type="scientific">Listeria monocytogenes serovar 1/2a (strain ATCC BAA-679 / EGD-e)</name>
    <dbReference type="NCBI Taxonomy" id="169963"/>
    <lineage>
        <taxon>Bacteria</taxon>
        <taxon>Bacillati</taxon>
        <taxon>Bacillota</taxon>
        <taxon>Bacilli</taxon>
        <taxon>Bacillales</taxon>
        <taxon>Listeriaceae</taxon>
        <taxon>Listeria</taxon>
    </lineage>
</organism>
<gene>
    <name type="ordered locus">lmo0191</name>
</gene>
<accession>Q8YAE0</accession>
<dbReference type="EC" id="3.5.1.-" evidence="1"/>
<dbReference type="EMBL" id="AL591973">
    <property type="protein sequence ID" value="CAC98406.1"/>
    <property type="molecule type" value="Genomic_DNA"/>
</dbReference>
<dbReference type="PIR" id="AH1098">
    <property type="entry name" value="AH1098"/>
</dbReference>
<dbReference type="RefSeq" id="NP_463722.1">
    <property type="nucleotide sequence ID" value="NC_003210.1"/>
</dbReference>
<dbReference type="SMR" id="Q8YAE0"/>
<dbReference type="STRING" id="169963.gene:17592827"/>
<dbReference type="PaxDb" id="169963-lmo0191"/>
<dbReference type="EnsemblBacteria" id="CAC98406">
    <property type="protein sequence ID" value="CAC98406"/>
    <property type="gene ID" value="CAC98406"/>
</dbReference>
<dbReference type="GeneID" id="987017"/>
<dbReference type="KEGG" id="lmo:lmo0191"/>
<dbReference type="PATRIC" id="fig|169963.11.peg.196"/>
<dbReference type="eggNOG" id="COG3394">
    <property type="taxonomic scope" value="Bacteria"/>
</dbReference>
<dbReference type="HOGENOM" id="CLU_064244_4_0_9"/>
<dbReference type="OrthoDB" id="9774177at2"/>
<dbReference type="PhylomeDB" id="Q8YAE0"/>
<dbReference type="BioCyc" id="LMON169963:LMO0191-MONOMER"/>
<dbReference type="Proteomes" id="UP000000817">
    <property type="component" value="Chromosome"/>
</dbReference>
<dbReference type="GO" id="GO:0019213">
    <property type="term" value="F:deacetylase activity"/>
    <property type="evidence" value="ECO:0000318"/>
    <property type="project" value="GO_Central"/>
</dbReference>
<dbReference type="GO" id="GO:0016811">
    <property type="term" value="F:hydrolase activity, acting on carbon-nitrogen (but not peptide) bonds, in linear amides"/>
    <property type="evidence" value="ECO:0007669"/>
    <property type="project" value="UniProtKB-UniRule"/>
</dbReference>
<dbReference type="GO" id="GO:0046872">
    <property type="term" value="F:metal ion binding"/>
    <property type="evidence" value="ECO:0007669"/>
    <property type="project" value="UniProtKB-KW"/>
</dbReference>
<dbReference type="GO" id="GO:0000272">
    <property type="term" value="P:polysaccharide catabolic process"/>
    <property type="evidence" value="ECO:0007669"/>
    <property type="project" value="InterPro"/>
</dbReference>
<dbReference type="CDD" id="cd10803">
    <property type="entry name" value="YdjC_EF3048_like"/>
    <property type="match status" value="1"/>
</dbReference>
<dbReference type="FunFam" id="3.20.20.370:FF:000010">
    <property type="entry name" value="Carbohydrate deacetylase"/>
    <property type="match status" value="1"/>
</dbReference>
<dbReference type="Gene3D" id="3.20.20.370">
    <property type="entry name" value="Glycoside hydrolase/deacetylase"/>
    <property type="match status" value="1"/>
</dbReference>
<dbReference type="HAMAP" id="MF_01246">
    <property type="entry name" value="COD"/>
    <property type="match status" value="1"/>
</dbReference>
<dbReference type="InterPro" id="IPR022948">
    <property type="entry name" value="COD_ChbG_bac"/>
</dbReference>
<dbReference type="InterPro" id="IPR011330">
    <property type="entry name" value="Glyco_hydro/deAcase_b/a-brl"/>
</dbReference>
<dbReference type="InterPro" id="IPR006879">
    <property type="entry name" value="YdjC-like"/>
</dbReference>
<dbReference type="NCBIfam" id="NF002559">
    <property type="entry name" value="PRK02134.1"/>
    <property type="match status" value="1"/>
</dbReference>
<dbReference type="PANTHER" id="PTHR31609:SF1">
    <property type="entry name" value="CARBOHYDRATE DEACETYLASE"/>
    <property type="match status" value="1"/>
</dbReference>
<dbReference type="PANTHER" id="PTHR31609">
    <property type="entry name" value="YDJC DEACETYLASE FAMILY MEMBER"/>
    <property type="match status" value="1"/>
</dbReference>
<dbReference type="Pfam" id="PF04794">
    <property type="entry name" value="YdjC"/>
    <property type="match status" value="1"/>
</dbReference>
<dbReference type="SUPFAM" id="SSF88713">
    <property type="entry name" value="Glycoside hydrolase/deacetylase"/>
    <property type="match status" value="1"/>
</dbReference>
<protein>
    <recommendedName>
        <fullName evidence="1">Carbohydrate deacetylase</fullName>
        <ecNumber evidence="1">3.5.1.-</ecNumber>
    </recommendedName>
</protein>
<feature type="chain" id="PRO_0000051596" description="Carbohydrate deacetylase">
    <location>
        <begin position="1"/>
        <end position="245"/>
    </location>
</feature>
<feature type="binding site" evidence="1">
    <location>
        <position position="59"/>
    </location>
    <ligand>
        <name>Mg(2+)</name>
        <dbReference type="ChEBI" id="CHEBI:18420"/>
    </ligand>
</feature>
<feature type="binding site" evidence="1">
    <location>
        <position position="125"/>
    </location>
    <ligand>
        <name>Mg(2+)</name>
        <dbReference type="ChEBI" id="CHEBI:18420"/>
    </ligand>
</feature>